<dbReference type="EC" id="3.4.21.-"/>
<dbReference type="EC" id="3.4.22.45" evidence="2"/>
<dbReference type="EC" id="3.6.4.-"/>
<dbReference type="EC" id="3.4.22.44"/>
<dbReference type="EC" id="2.7.7.48"/>
<dbReference type="EMBL" id="Y09854">
    <property type="protein sequence ID" value="CAA70983.1"/>
    <property type="molecule type" value="Genomic_RNA"/>
</dbReference>
<dbReference type="RefSeq" id="NP_044727.1">
    <property type="nucleotide sequence ID" value="NC_001814.1"/>
</dbReference>
<dbReference type="MEROPS" id="C04.012"/>
<dbReference type="GeneID" id="1403650"/>
<dbReference type="KEGG" id="vg:1403650"/>
<dbReference type="Proteomes" id="UP000000568">
    <property type="component" value="Segment"/>
</dbReference>
<dbReference type="GO" id="GO:0019029">
    <property type="term" value="C:helical viral capsid"/>
    <property type="evidence" value="ECO:0007669"/>
    <property type="project" value="UniProtKB-KW"/>
</dbReference>
<dbReference type="GO" id="GO:0044162">
    <property type="term" value="C:host cell cytoplasmic vesicle membrane"/>
    <property type="evidence" value="ECO:0007669"/>
    <property type="project" value="UniProtKB-SubCell"/>
</dbReference>
<dbReference type="GO" id="GO:0016020">
    <property type="term" value="C:membrane"/>
    <property type="evidence" value="ECO:0007669"/>
    <property type="project" value="UniProtKB-KW"/>
</dbReference>
<dbReference type="GO" id="GO:0005524">
    <property type="term" value="F:ATP binding"/>
    <property type="evidence" value="ECO:0007669"/>
    <property type="project" value="UniProtKB-KW"/>
</dbReference>
<dbReference type="GO" id="GO:0004197">
    <property type="term" value="F:cysteine-type endopeptidase activity"/>
    <property type="evidence" value="ECO:0007669"/>
    <property type="project" value="InterPro"/>
</dbReference>
<dbReference type="GO" id="GO:0004386">
    <property type="term" value="F:helicase activity"/>
    <property type="evidence" value="ECO:0007669"/>
    <property type="project" value="UniProtKB-KW"/>
</dbReference>
<dbReference type="GO" id="GO:0016818">
    <property type="term" value="F:hydrolase activity, acting on acid anhydrides, in phosphorus-containing anhydrides"/>
    <property type="evidence" value="ECO:0007669"/>
    <property type="project" value="InterPro"/>
</dbReference>
<dbReference type="GO" id="GO:0003723">
    <property type="term" value="F:RNA binding"/>
    <property type="evidence" value="ECO:0007669"/>
    <property type="project" value="InterPro"/>
</dbReference>
<dbReference type="GO" id="GO:0003968">
    <property type="term" value="F:RNA-directed RNA polymerase activity"/>
    <property type="evidence" value="ECO:0007669"/>
    <property type="project" value="UniProtKB-KW"/>
</dbReference>
<dbReference type="GO" id="GO:0008236">
    <property type="term" value="F:serine-type peptidase activity"/>
    <property type="evidence" value="ECO:0007669"/>
    <property type="project" value="UniProtKB-KW"/>
</dbReference>
<dbReference type="GO" id="GO:0005198">
    <property type="term" value="F:structural molecule activity"/>
    <property type="evidence" value="ECO:0007669"/>
    <property type="project" value="InterPro"/>
</dbReference>
<dbReference type="GO" id="GO:0006351">
    <property type="term" value="P:DNA-templated transcription"/>
    <property type="evidence" value="ECO:0007669"/>
    <property type="project" value="InterPro"/>
</dbReference>
<dbReference type="GO" id="GO:0006508">
    <property type="term" value="P:proteolysis"/>
    <property type="evidence" value="ECO:0007669"/>
    <property type="project" value="UniProtKB-KW"/>
</dbReference>
<dbReference type="GO" id="GO:0052170">
    <property type="term" value="P:symbiont-mediated suppression of host innate immune response"/>
    <property type="evidence" value="ECO:0007669"/>
    <property type="project" value="UniProtKB-KW"/>
</dbReference>
<dbReference type="GO" id="GO:0039694">
    <property type="term" value="P:viral RNA genome replication"/>
    <property type="evidence" value="ECO:0007669"/>
    <property type="project" value="InterPro"/>
</dbReference>
<dbReference type="CDD" id="cd23175">
    <property type="entry name" value="ps-ssRNAv_Potyviridae_RdRp"/>
    <property type="match status" value="1"/>
</dbReference>
<dbReference type="Gene3D" id="3.30.70.270">
    <property type="match status" value="1"/>
</dbReference>
<dbReference type="Gene3D" id="3.90.70.150">
    <property type="entry name" value="Helper component proteinase"/>
    <property type="match status" value="1"/>
</dbReference>
<dbReference type="Gene3D" id="3.40.50.300">
    <property type="entry name" value="P-loop containing nucleotide triphosphate hydrolases"/>
    <property type="match status" value="2"/>
</dbReference>
<dbReference type="Gene3D" id="2.40.10.10">
    <property type="entry name" value="Trypsin-like serine proteases"/>
    <property type="match status" value="2"/>
</dbReference>
<dbReference type="InterPro" id="IPR011545">
    <property type="entry name" value="DEAD/DEAH_box_helicase_dom"/>
</dbReference>
<dbReference type="InterPro" id="IPR043502">
    <property type="entry name" value="DNA/RNA_pol_sf"/>
</dbReference>
<dbReference type="InterPro" id="IPR001456">
    <property type="entry name" value="HC-pro"/>
</dbReference>
<dbReference type="InterPro" id="IPR031159">
    <property type="entry name" value="HC_PRO_CPD_dom"/>
</dbReference>
<dbReference type="InterPro" id="IPR042308">
    <property type="entry name" value="HC_PRO_CPD_sf"/>
</dbReference>
<dbReference type="InterPro" id="IPR014001">
    <property type="entry name" value="Helicase_ATP-bd"/>
</dbReference>
<dbReference type="InterPro" id="IPR001650">
    <property type="entry name" value="Helicase_C-like"/>
</dbReference>
<dbReference type="InterPro" id="IPR027417">
    <property type="entry name" value="P-loop_NTPase"/>
</dbReference>
<dbReference type="InterPro" id="IPR002540">
    <property type="entry name" value="Pept_S30_P1_potyvir"/>
</dbReference>
<dbReference type="InterPro" id="IPR009003">
    <property type="entry name" value="Peptidase_S1_PA"/>
</dbReference>
<dbReference type="InterPro" id="IPR043504">
    <property type="entry name" value="Peptidase_S1_PA_chymotrypsin"/>
</dbReference>
<dbReference type="InterPro" id="IPR001592">
    <property type="entry name" value="Poty_coat"/>
</dbReference>
<dbReference type="InterPro" id="IPR001730">
    <property type="entry name" value="Potyv_NIa-pro_dom"/>
</dbReference>
<dbReference type="InterPro" id="IPR039560">
    <property type="entry name" value="Potyvirid-P3"/>
</dbReference>
<dbReference type="InterPro" id="IPR013648">
    <property type="entry name" value="PP_Potyviridae"/>
</dbReference>
<dbReference type="InterPro" id="IPR043128">
    <property type="entry name" value="Rev_trsase/Diguanyl_cyclase"/>
</dbReference>
<dbReference type="InterPro" id="IPR001205">
    <property type="entry name" value="RNA-dir_pol_C"/>
</dbReference>
<dbReference type="InterPro" id="IPR007094">
    <property type="entry name" value="RNA-dir_pol_PSvirus"/>
</dbReference>
<dbReference type="PANTHER" id="PTHR43519">
    <property type="entry name" value="ATP-DEPENDENT RNA HELICASE HRPB"/>
    <property type="match status" value="1"/>
</dbReference>
<dbReference type="PANTHER" id="PTHR43519:SF1">
    <property type="entry name" value="ATP-DEPENDENT RNA HELICASE HRPB"/>
    <property type="match status" value="1"/>
</dbReference>
<dbReference type="Pfam" id="PF00270">
    <property type="entry name" value="DEAD"/>
    <property type="match status" value="1"/>
</dbReference>
<dbReference type="Pfam" id="PF00271">
    <property type="entry name" value="Helicase_C"/>
    <property type="match status" value="1"/>
</dbReference>
<dbReference type="Pfam" id="PF00863">
    <property type="entry name" value="Peptidase_C4"/>
    <property type="match status" value="1"/>
</dbReference>
<dbReference type="Pfam" id="PF00851">
    <property type="entry name" value="Peptidase_C6"/>
    <property type="match status" value="1"/>
</dbReference>
<dbReference type="Pfam" id="PF01577">
    <property type="entry name" value="Peptidase_S30"/>
    <property type="match status" value="1"/>
</dbReference>
<dbReference type="Pfam" id="PF00767">
    <property type="entry name" value="Poty_coat"/>
    <property type="match status" value="1"/>
</dbReference>
<dbReference type="Pfam" id="PF08440">
    <property type="entry name" value="Poty_PP"/>
    <property type="match status" value="1"/>
</dbReference>
<dbReference type="Pfam" id="PF13608">
    <property type="entry name" value="Potyvirid-P3"/>
    <property type="match status" value="1"/>
</dbReference>
<dbReference type="Pfam" id="PF00680">
    <property type="entry name" value="RdRP_1"/>
    <property type="match status" value="1"/>
</dbReference>
<dbReference type="PRINTS" id="PR00966">
    <property type="entry name" value="NIAPOTYPTASE"/>
</dbReference>
<dbReference type="SMART" id="SM00487">
    <property type="entry name" value="DEXDc"/>
    <property type="match status" value="1"/>
</dbReference>
<dbReference type="SMART" id="SM00490">
    <property type="entry name" value="HELICc"/>
    <property type="match status" value="1"/>
</dbReference>
<dbReference type="SUPFAM" id="SSF56672">
    <property type="entry name" value="DNA/RNA polymerases"/>
    <property type="match status" value="1"/>
</dbReference>
<dbReference type="SUPFAM" id="SSF52540">
    <property type="entry name" value="P-loop containing nucleoside triphosphate hydrolases"/>
    <property type="match status" value="2"/>
</dbReference>
<dbReference type="SUPFAM" id="SSF50494">
    <property type="entry name" value="Trypsin-like serine proteases"/>
    <property type="match status" value="1"/>
</dbReference>
<dbReference type="PROSITE" id="PS51744">
    <property type="entry name" value="HC_PRO_CPD"/>
    <property type="match status" value="1"/>
</dbReference>
<dbReference type="PROSITE" id="PS51192">
    <property type="entry name" value="HELICASE_ATP_BIND_1"/>
    <property type="match status" value="1"/>
</dbReference>
<dbReference type="PROSITE" id="PS51194">
    <property type="entry name" value="HELICASE_CTER"/>
    <property type="match status" value="1"/>
</dbReference>
<dbReference type="PROSITE" id="PS51436">
    <property type="entry name" value="POTYVIRUS_NIA_PRO"/>
    <property type="match status" value="1"/>
</dbReference>
<dbReference type="PROSITE" id="PS51871">
    <property type="entry name" value="PV_P1_PRO"/>
    <property type="match status" value="1"/>
</dbReference>
<dbReference type="PROSITE" id="PS50507">
    <property type="entry name" value="RDRP_SSRNA_POS"/>
    <property type="match status" value="1"/>
</dbReference>
<reference key="1">
    <citation type="submission" date="1997-05" db="EMBL/GenBank/DDBJ databases">
        <title>The complete nucleotide sequence of the Ryegrass mosaic virus genomic RNA.</title>
        <authorList>
            <person name="Schubert J."/>
            <person name="Merits A."/>
            <person name="Jaervekuelg L."/>
            <person name="Paulin L."/>
            <person name="Rubenstein F."/>
        </authorList>
    </citation>
    <scope>NUCLEOTIDE SEQUENCE [GENOMIC RNA]</scope>
</reference>
<reference key="2">
    <citation type="journal article" date="2021" name="PLoS ONE">
        <title>Analysis of proteolytic processing sites in potyvirus polyproteins revealed differential amino acid preferences of NIa-Pro protease in each of seven cleavage sites.</title>
        <authorList>
            <person name="Goh C.J."/>
            <person name="Hahn Y."/>
        </authorList>
    </citation>
    <scope>PROTEOLYTIC CLEAVAGE (GENOME POLYPROTEIN)</scope>
</reference>
<organismHost>
    <name type="scientific">Dactylis glomerata</name>
    <name type="common">Orchard grass</name>
    <name type="synonym">Cock's-foot grass</name>
    <dbReference type="NCBI Taxonomy" id="4509"/>
</organismHost>
<organismHost>
    <name type="scientific">Lolium</name>
    <dbReference type="NCBI Taxonomy" id="4520"/>
</organismHost>
<proteinExistence type="evidence at protein level"/>
<name>POLG_RGMVD</name>
<accession>O11436</accession>
<evidence type="ECO:0000250" key="1"/>
<evidence type="ECO:0000250" key="2">
    <source>
        <dbReference type="UniProtKB" id="P04517"/>
    </source>
</evidence>
<evidence type="ECO:0000250" key="3">
    <source>
        <dbReference type="UniProtKB" id="P09814"/>
    </source>
</evidence>
<evidence type="ECO:0000250" key="4">
    <source>
        <dbReference type="UniProtKB" id="P13529"/>
    </source>
</evidence>
<evidence type="ECO:0000250" key="5">
    <source>
        <dbReference type="UniProtKB" id="P17767"/>
    </source>
</evidence>
<evidence type="ECO:0000250" key="6">
    <source>
        <dbReference type="UniProtKB" id="P18247"/>
    </source>
</evidence>
<evidence type="ECO:0000250" key="7">
    <source>
        <dbReference type="UniProtKB" id="P89509"/>
    </source>
</evidence>
<evidence type="ECO:0000255" key="8"/>
<evidence type="ECO:0000255" key="9">
    <source>
        <dbReference type="PROSITE-ProRule" id="PRU00539"/>
    </source>
</evidence>
<evidence type="ECO:0000255" key="10">
    <source>
        <dbReference type="PROSITE-ProRule" id="PRU00541"/>
    </source>
</evidence>
<evidence type="ECO:0000255" key="11">
    <source>
        <dbReference type="PROSITE-ProRule" id="PRU00766"/>
    </source>
</evidence>
<evidence type="ECO:0000255" key="12">
    <source>
        <dbReference type="PROSITE-ProRule" id="PRU01080"/>
    </source>
</evidence>
<evidence type="ECO:0000255" key="13">
    <source>
        <dbReference type="PROSITE-ProRule" id="PRU01219"/>
    </source>
</evidence>
<evidence type="ECO:0000256" key="14">
    <source>
        <dbReference type="SAM" id="MobiDB-lite"/>
    </source>
</evidence>
<evidence type="ECO:0000305" key="15"/>
<evidence type="ECO:0000305" key="16">
    <source>
    </source>
</evidence>
<protein>
    <recommendedName>
        <fullName>Genome polyprotein</fullName>
    </recommendedName>
    <component>
        <recommendedName>
            <fullName>P1 protease</fullName>
            <ecNumber>3.4.21.-</ecNumber>
        </recommendedName>
        <alternativeName>
            <fullName>Leader protease P1</fullName>
        </alternativeName>
        <alternativeName>
            <fullName>N-terminal protein</fullName>
        </alternativeName>
        <alternativeName>
            <fullName>P1 proteinase</fullName>
        </alternativeName>
    </component>
    <component>
        <recommendedName>
            <fullName>Helper component proteinase</fullName>
            <shortName>HC-pro</shortName>
            <ecNumber evidence="2">3.4.22.45</ecNumber>
        </recommendedName>
    </component>
    <component>
        <recommendedName>
            <fullName>Protein P3</fullName>
        </recommendedName>
    </component>
    <component>
        <recommendedName>
            <fullName>6 kDa protein 1</fullName>
            <shortName>6K1</shortName>
        </recommendedName>
    </component>
    <component>
        <recommendedName>
            <fullName>Cytoplasmic inclusion protein</fullName>
            <shortName>CI</shortName>
            <ecNumber>3.6.4.-</ecNumber>
        </recommendedName>
    </component>
    <component>
        <recommendedName>
            <fullName>6 kDa protein 2</fullName>
            <shortName>6K2</shortName>
        </recommendedName>
    </component>
    <component>
        <recommendedName>
            <fullName>Viral genome-linked protein</fullName>
        </recommendedName>
        <alternativeName>
            <fullName>VPg</fullName>
        </alternativeName>
    </component>
    <component>
        <recommendedName>
            <fullName>Nuclear inclusion protein A</fullName>
            <shortName>NI-a</shortName>
            <shortName>NIa</shortName>
            <ecNumber>3.4.22.44</ecNumber>
        </recommendedName>
        <alternativeName>
            <fullName>49 kDa proteinase</fullName>
            <shortName>49 kDa-Pro</shortName>
        </alternativeName>
        <alternativeName>
            <fullName>NIa-pro</fullName>
        </alternativeName>
    </component>
    <component>
        <recommendedName>
            <fullName>Nuclear inclusion protein B</fullName>
            <shortName>NI-b</shortName>
            <shortName>NIb</shortName>
            <ecNumber>2.7.7.48</ecNumber>
        </recommendedName>
        <alternativeName>
            <fullName>RNA-directed RNA polymerase</fullName>
        </alternativeName>
    </component>
    <component>
        <recommendedName>
            <fullName>Capsid protein</fullName>
            <shortName>CP</shortName>
        </recommendedName>
        <alternativeName>
            <fullName>Coat protein</fullName>
        </alternativeName>
    </component>
</protein>
<keyword id="KW-0067">ATP-binding</keyword>
<keyword id="KW-0167">Capsid protein</keyword>
<keyword id="KW-0191">Covalent protein-RNA linkage</keyword>
<keyword id="KW-1139">Helical capsid protein</keyword>
<keyword id="KW-0347">Helicase</keyword>
<keyword id="KW-1036">Host cytoplasmic vesicle</keyword>
<keyword id="KW-1043">Host membrane</keyword>
<keyword id="KW-0945">Host-virus interaction</keyword>
<keyword id="KW-0378">Hydrolase</keyword>
<keyword id="KW-1090">Inhibition of host innate immune response by virus</keyword>
<keyword id="KW-0472">Membrane</keyword>
<keyword id="KW-0547">Nucleotide-binding</keyword>
<keyword id="KW-0548">Nucleotidyltransferase</keyword>
<keyword id="KW-0597">Phosphoprotein</keyword>
<keyword id="KW-0645">Protease</keyword>
<keyword id="KW-1185">Reference proteome</keyword>
<keyword id="KW-0696">RNA-directed RNA polymerase</keyword>
<keyword id="KW-0720">Serine protease</keyword>
<keyword id="KW-0941">Suppressor of RNA silencing</keyword>
<keyword id="KW-0788">Thiol protease</keyword>
<keyword id="KW-0808">Transferase</keyword>
<keyword id="KW-0899">Viral immunoevasion</keyword>
<keyword id="KW-0693">Viral RNA replication</keyword>
<keyword id="KW-0946">Virion</keyword>
<feature type="chain" id="PRO_0000420021" description="Genome polyprotein">
    <location>
        <begin position="1"/>
        <end position="3086"/>
    </location>
</feature>
<feature type="chain" id="PRO_5000146992" description="P1 protease" evidence="8">
    <location>
        <begin position="1"/>
        <end position="256"/>
    </location>
</feature>
<feature type="chain" id="PRO_5000146993" description="Helper component proteinase" evidence="8">
    <location>
        <begin position="257"/>
        <end position="711"/>
    </location>
</feature>
<feature type="chain" id="PRO_5000146994" description="Protein P3" evidence="8">
    <location>
        <begin position="712"/>
        <end position="1063"/>
    </location>
</feature>
<feature type="chain" id="PRO_5000146995" description="6 kDa protein 1" evidence="8">
    <location>
        <begin position="1064"/>
        <end position="1116"/>
    </location>
</feature>
<feature type="chain" id="PRO_5000146996" description="Cytoplasmic inclusion protein" evidence="8">
    <location>
        <begin position="1117"/>
        <end position="1753"/>
    </location>
</feature>
<feature type="chain" id="PRO_5000146997" description="6 kDa protein 2" evidence="8">
    <location>
        <begin position="1754"/>
        <end position="1806"/>
    </location>
</feature>
<feature type="chain" id="PRO_5000146998" description="Viral genome-linked protein" evidence="8">
    <location>
        <begin position="1807"/>
        <end position="1999"/>
    </location>
</feature>
<feature type="chain" id="PRO_5000146999" description="Nuclear inclusion protein A" evidence="8">
    <location>
        <begin position="2000"/>
        <end position="2240"/>
    </location>
</feature>
<feature type="chain" id="PRO_5000147000" description="Nuclear inclusion protein B" evidence="8">
    <location>
        <begin position="2241"/>
        <end position="2758"/>
    </location>
</feature>
<feature type="chain" id="PRO_5000147001" description="Capsid protein" evidence="8">
    <location>
        <begin position="2759"/>
        <end position="3086"/>
    </location>
</feature>
<feature type="domain" description="Peptidase S30" evidence="13">
    <location>
        <begin position="122"/>
        <end position="256"/>
    </location>
</feature>
<feature type="domain" description="Peptidase C6" evidence="12">
    <location>
        <begin position="590"/>
        <end position="711"/>
    </location>
</feature>
<feature type="domain" description="Helicase ATP-binding" evidence="10">
    <location>
        <begin position="1189"/>
        <end position="1341"/>
    </location>
</feature>
<feature type="domain" description="Peptidase C4" evidence="11">
    <location>
        <begin position="2000"/>
        <end position="2217"/>
    </location>
</feature>
<feature type="domain" description="RdRp catalytic" evidence="9">
    <location>
        <begin position="2482"/>
        <end position="2606"/>
    </location>
</feature>
<feature type="region of interest" description="Disordered" evidence="14">
    <location>
        <begin position="1970"/>
        <end position="1990"/>
    </location>
</feature>
<feature type="region of interest" description="Disordered" evidence="14">
    <location>
        <begin position="2762"/>
        <end position="2822"/>
    </location>
</feature>
<feature type="short sequence motif" description="DEAH box">
    <location>
        <begin position="1291"/>
        <end position="1294"/>
    </location>
</feature>
<feature type="compositionally biased region" description="Low complexity" evidence="14">
    <location>
        <begin position="2762"/>
        <end position="2821"/>
    </location>
</feature>
<feature type="active site" description="For P1 proteinase activity" evidence="13">
    <location>
        <position position="173"/>
    </location>
</feature>
<feature type="active site" description="For P1 proteinase activity" evidence="13">
    <location>
        <position position="182"/>
    </location>
</feature>
<feature type="active site" description="For P1 proteinase activity" evidence="13">
    <location>
        <position position="215"/>
    </location>
</feature>
<feature type="active site" description="For helper component proteinase activity" evidence="12">
    <location>
        <position position="598"/>
    </location>
</feature>
<feature type="active site" description="For helper component proteinase activity" evidence="12">
    <location>
        <position position="670"/>
    </location>
</feature>
<feature type="active site" description="For nuclear inclusion protein A activity" evidence="11">
    <location>
        <position position="2045"/>
    </location>
</feature>
<feature type="active site" description="For nuclear inclusion protein A activity" evidence="11">
    <location>
        <position position="2080"/>
    </location>
</feature>
<feature type="active site" description="For nuclear inclusion protein A activity" evidence="11">
    <location>
        <position position="2149"/>
    </location>
</feature>
<feature type="binding site" evidence="10">
    <location>
        <begin position="1202"/>
        <end position="1209"/>
    </location>
    <ligand>
        <name>ATP</name>
        <dbReference type="ChEBI" id="CHEBI:30616"/>
    </ligand>
</feature>
<feature type="site" description="Cleavage; by P1 proteinase" evidence="13">
    <location>
        <begin position="256"/>
        <end position="257"/>
    </location>
</feature>
<feature type="site" description="Cleavage; by autolysis" evidence="12">
    <location>
        <begin position="711"/>
        <end position="712"/>
    </location>
</feature>
<feature type="site" description="Cleavage; by NIa-pro" evidence="16">
    <location>
        <begin position="1063"/>
        <end position="1064"/>
    </location>
</feature>
<feature type="site" description="Cleavage; by NIa-pro" evidence="16">
    <location>
        <begin position="1116"/>
        <end position="1117"/>
    </location>
</feature>
<feature type="site" description="Cleavage; by NIa-pro" evidence="16">
    <location>
        <begin position="1753"/>
        <end position="1754"/>
    </location>
</feature>
<feature type="site" description="Cleavage; by NIa-pro" evidence="16">
    <location>
        <begin position="1806"/>
        <end position="1807"/>
    </location>
</feature>
<feature type="site" description="Cleavage; by NIa-pro" evidence="16">
    <location>
        <begin position="1999"/>
        <end position="2000"/>
    </location>
</feature>
<feature type="site" description="Cleavage; by NIa-pro" evidence="16">
    <location>
        <begin position="2240"/>
        <end position="2241"/>
    </location>
</feature>
<feature type="site" description="Cleavage; by NIa-pro" evidence="16">
    <location>
        <begin position="2758"/>
        <end position="2759"/>
    </location>
</feature>
<feature type="modified residue" description="O-(5'-phospho-RNA)-tyrosine" evidence="3">
    <location>
        <position position="1870"/>
    </location>
</feature>
<feature type="modified residue" description="Phosphothreonine" evidence="5">
    <location>
        <position position="3069"/>
    </location>
</feature>
<organism>
    <name type="scientific">Ryegrass mosaic virus (isolate Denmark/Danish)</name>
    <name type="common">RGMV</name>
    <dbReference type="NCBI Taxonomy" id="652106"/>
    <lineage>
        <taxon>Viruses</taxon>
        <taxon>Riboviria</taxon>
        <taxon>Orthornavirae</taxon>
        <taxon>Pisuviricota</taxon>
        <taxon>Stelpaviricetes</taxon>
        <taxon>Patatavirales</taxon>
        <taxon>Potyviridae</taxon>
        <taxon>Rymovirus</taxon>
        <taxon>Ryegrass mosaic virus</taxon>
    </lineage>
</organism>
<comment type="function">
    <molecule>Helper component proteinase</molecule>
    <text evidence="2">Required for aphid transmission and also has proteolytic activity. Only cleaves a Gly-Gly dipeptide at its own C-terminus. Interacts with virions and aphid stylets. Acts as a suppressor of RNA-mediated gene silencing, also known as post-transcriptional gene silencing (PTGS), a mechanism of plant viral defense that limits the accumulation of viral RNAs. May have RNA-binding activity.</text>
</comment>
<comment type="function">
    <molecule>Cytoplasmic inclusion protein</molecule>
    <text>Has helicase activity. It may be involved in replication.</text>
</comment>
<comment type="function">
    <molecule>6 kDa protein 1</molecule>
    <text evidence="4 7">Indispensable for virus replication (By similarity). Reduces the abundance of host transcripts related to jasmonic acid biosynthesis therefore altering the host defenses (By similarity). In order to increase its own stability, decreases host protein degradation pathways (By similarity).</text>
</comment>
<comment type="function">
    <molecule>6 kDa protein 2</molecule>
    <text evidence="3">Indispensable for virus replication.</text>
</comment>
<comment type="function">
    <molecule>Viral genome-linked protein</molecule>
    <text evidence="6">Mediates the cap-independent, EIF4E-dependent translation of viral genomic RNAs (By similarity). Binds to the cap-binding site of host EIF4E and thus interferes with the host EIF4E-dependent mRNA export and translation (By similarity). VPg-RNA directly binds EIF4E and is a template for transcription (By similarity). Also forms trimeric complexes with EIF4E-EIF4G, which are templates for translation (By similarity).</text>
</comment>
<comment type="function">
    <molecule>Nuclear inclusion protein A</molecule>
    <text evidence="2">Has RNA-binding and proteolytic activities.</text>
</comment>
<comment type="function">
    <molecule>Nuclear inclusion protein B</molecule>
    <text>An RNA-dependent RNA polymerase that plays an essential role in the virus replication.</text>
</comment>
<comment type="function">
    <molecule>Capsid protein</molecule>
    <text evidence="2">Involved in aphid transmission, cell-to-cell and systemis movement, encapsidation of the viral RNA and in the regulation of viral RNA amplification.</text>
</comment>
<comment type="catalytic activity">
    <molecule>Nuclear inclusion protein B</molecule>
    <reaction evidence="9">
        <text>RNA(n) + a ribonucleoside 5'-triphosphate = RNA(n+1) + diphosphate</text>
        <dbReference type="Rhea" id="RHEA:21248"/>
        <dbReference type="Rhea" id="RHEA-COMP:14527"/>
        <dbReference type="Rhea" id="RHEA-COMP:17342"/>
        <dbReference type="ChEBI" id="CHEBI:33019"/>
        <dbReference type="ChEBI" id="CHEBI:61557"/>
        <dbReference type="ChEBI" id="CHEBI:140395"/>
        <dbReference type="EC" id="2.7.7.48"/>
    </reaction>
</comment>
<comment type="catalytic activity">
    <molecule>Nuclear inclusion protein A</molecule>
    <reaction evidence="2">
        <text>Hydrolyzes glutaminyl bonds, and activity is further restricted by preferences for the amino acids in P6 - P1' that vary with the species of potyvirus, e.g. Glu-Xaa-Xaa-Tyr-Xaa-Gln-|-(Ser or Gly) for the enzyme from tobacco etch virus. The natural substrate is the viral polyprotein, but other proteins and oligopeptides containing the appropriate consensus sequence are also cleaved.</text>
        <dbReference type="EC" id="3.4.22.44"/>
    </reaction>
</comment>
<comment type="catalytic activity">
    <molecule>Helper component proteinase</molecule>
    <reaction evidence="2">
        <text>Hydrolyzes a Gly-|-Gly bond at its own C-terminus, commonly in the sequence -Tyr-Xaa-Val-Gly-|-Gly, in the processing of the potyviral polyprotein.</text>
        <dbReference type="EC" id="3.4.22.45"/>
    </reaction>
</comment>
<comment type="subcellular location">
    <molecule>6 kDa protein 1</molecule>
    <subcellularLocation>
        <location>Host cytoplasmic vesicle membrane</location>
    </subcellularLocation>
    <text evidence="4">Probably colocalizes with 6K2-induced vesicles associated with host chloroplasts.</text>
</comment>
<comment type="subcellular location">
    <molecule>6 kDa protein 2</molecule>
    <subcellularLocation>
        <location evidence="3">Host cytoplasmic vesicle</location>
    </subcellularLocation>
    <text evidence="3">6K-induced vesicles associate with host chloroplasts.</text>
</comment>
<comment type="subcellular location">
    <molecule>Capsid protein</molecule>
    <subcellularLocation>
        <location evidence="15">Virion</location>
    </subcellularLocation>
</comment>
<comment type="domain">
    <molecule>Helper component proteinase</molecule>
    <text>The N-terminus is involved in interaction with stylets. The central part is involved in interaction with virions and the C-terminus is involved in cell-to cell movement of the virus.</text>
</comment>
<comment type="PTM">
    <molecule>Viral genome-linked protein</molecule>
    <text evidence="3">VPg is uridylylated by the polymerase and is covalently attached to the 5'-end of the genomic RNA. This uridylylated form acts as a nucleotide-peptide primer for the polymerase (By similarity).</text>
</comment>
<comment type="PTM">
    <molecule>Genome polyprotein</molecule>
    <text evidence="1">Genome polyprotein of potyviruses undergoes post-translational proteolytic processing by the main proteinase NIa-pro resulting in the production of at least ten individual proteins. The P1 proteinase and the HC-pro cleave only their respective C-termini autocatalytically. 6K1 is essential for proper proteolytic separation of P3 from CI (By similarity).</text>
</comment>
<comment type="similarity">
    <text evidence="15">Belongs to the potyviridae genome polyprotein family.</text>
</comment>
<sequence length="3086" mass="347695">MMNFGSLNVGLKQVDGTWVPRVFEEKEMARLLAEKQHARVMRATQEMMKAPNPFAEFDEMHQRGNPFAGRVRKCETREPKSAQKPIVTVDTVPVAIYTDVIWPENGKVHALSRRRAPRKHARRSKILACDLLTQVLNISRRAGKSVEVIGKRRCCLKPRRRDGKSCFGVITKHHKGVLSSRDMVKDLFVDSIIEHIAYTGHTPLIDAADIKPGDSGLIYREKKDGYVTRVVRGRHDGDIIDARDYVRAGIHTIKHYSDDGKSLVKYAPYCQPSHHTFGHMCRVTWSDTEILQFREMLSQAIMPQRDPRCDICAEVAGQRTKDEILQHARTSQMMQMLEFGKEDERWKAPRRVMETLLEESNWPSMDYSTSSEITTICCGNNDEPFRRIYSIMKVLAEPNLADVSAWQEANSSLLQLARYMKNREMSVQAGNSATFTNPFPPTVHTFGPTNNGADILQGPWDNWGDKQPIALAFFEKHFNKWQINEFSIDRRVRKHIRGTRKLALMDLNQSRSIKDLEDHVQEEEIPYERKTESCITMYKDQYLYSCSCVTARDGKPYLSMRYLQATGLIPIARGADVQHMPNSDSWQGFYYVAPEGYCYINIFLPMLALAPYYKVGKLSELIGKLIKVLGKWPKLKDVALACLYITEYHTYAQNALLPPILVHHSTRTMHVVDTLGSLSVGYHVLKAGTVKHLVNLASRLATGEMLDYNVGGSLGGIHAYDLLIRSTFDHVLLERALETDPYYILYSALSPTVLKQMYTSKSYANALRVFVRSNQSLFQVVCTLENLARRMTRAQSIEQQIMQLQSLYPQLLDMLADNIPDSPLSWLSHHVTTDSMQRAIELNNCDIELARGGYASINTSWRKKKEQYYADLIKEYYNALSPQAKIFVSRAYIGYLHATTPLFANARKISSEIASNICTQAYSRTIGRGISIVSSGGRKGKTWLTARGDSFYKTMISRAIKLYTPEVSAVIGVATVVGILLSTMTTLHTYLVKNKQTAQKTNEKFEELMYDKVALYIPKYDAEHSHLQGKDLDFEHFARWLMARDKKLSSFVQSHLVDTVTHQAKDDTNVWIEKCIATIVLMMMAIDSNKSDKLYQILCKLRTVFSTMGQTVVTHQSIDEILDIDESKRTTIDFERVEVMQPTQPILKTTFEGFWDMQIQMGRTVAHYRTTGRLVELTRENIAEVVATISSDTANAEFIVRGGVGTGKSTSLPTALCERGRVLMLEPTRPLTENVAQQLRGEPHFKSPSVHMRGLNTFGSSRITIMTSGYALHYYANNRQLLRDFEFIMFDECHVMDSSAMAFYSLCNDAKVAAKLLKVSATPAGRECEFKPMFPVRVSEAAQLSFESFVTAQGSKSTYDIIQYGNNILVYVASYNEVDKLAAMLLEKRFRVTKVDGRTMKLNTHGIELHGTAQVKHFIVATNIIENGVTLEIDCLVDFGTKVVAQLDTEGRRIMYMKVPISYGERIQRLGRVGRTKPGARLKVGHTMRGIVEIPEVIATEAAFQCFMYDLPVMTGQVSVSLLSKCTREQARTMAAFELSPFTMSNLVAFDGTMHPAIHDLLKKFKLRDSTVVLRRTALPLRASASWYTVREYETIIGDLHIENKDVRIPFVANDLSNSLLEGLWDAIQCNRSDVSTTKLTTVSANKIAYTLKTDTSSIQRTISIIDDLLAEERKKQEMFTHHLSTTSGGYTFGLNAIAMCIKSRYAKGYCIENIATLTNVRNQLTEFSGMSEDQYTSEIIQNYPDLTLVHHQSKQEIIRNLKLKAKYDQTLIASDLLLGTAVLIGGGAMLYKTFMTETNTRVHLEGDGKRQREKLQYRAARDSKQDYEVYADEREIQENYGEAYTKHGRKGPAHEKGTGSKTREFTNFYGFDPAEYDTVRLVDPITGKTCDKAVRDLLRMRDVADTFAEIRESMDEDMILQPGVNFAPALIEAYFMNSRTNAARRVDLVPHNPMQVGRLSNNIAGFPTHDGELRQSRPSRPIQKDQVPAANEYSVQHESKSIAKGLRDYHPVSSNLCALEYYCGDMRTSIYGVCYGPYILTTAHLIKEKGGWLKIRTKHGLFKLEAMDRVQIRELCGSDIIVIKGPKDMPPAPMRLKFRAPKSGERAVLVGFVDDNLDRQLVSDSSAVYRRENTGFWKHWITTKYGNCGLPMVSVDTMDIIGLHSLGAQNSNENYFAALTDDFSKQFFEPETDVPWQRKWSYNADKVNYGTMDLTSNQPSGAFKTTKLLEDLLEAVSHQSQEYTWLTKYCGANLLVIGKCPGNLITKHVIKGKSPTFDLFLSVDAQASDFFKPLMGDYAPSRLNREAFVKDITKYDTEIPIGNLSITDFENAVEDTYYILKDSGIEQCNYITDAIPIFDSMNMKAATGALYGGKKKDYFENYTDDMKQNILKESYIRLREGKMGIWNGSLKAELRSKEKVEANKTRVFTAAPLDTLLAGKGCVDDFNNQFYAAHLKGPWTVGITKFFGRWNDFLSELPPGWDYFDADGSRFDSSLTPFLLNAVLNIRKKFMINWAFGQRCLGNLYTEIIYTPIATPDGSVVKKMRGNNSGQPSTVVDNTIMVIIAMQYAISKAEFPAGRLRDQIRYFANGDDLVVAVEPSLSDKISSFSASFAELGLSYDFSNKVNDRSELQFMSHTGKLIDGMYIPMLERERICAILEWSRSDEPQFQLDAISAAMIEAWGDDELLYQIRRYYSWLLEQEPYKSIAELGHAPYLAEAALKALYTGKDPDAELIAIYERAMLNTPPTEDRPTKVVHEANVTAASSAATQTSTTSPTVTSTSGASTSTSSGTTSAPLASTTPPVSATTTPSTGTTAPTTPTVRAANLPDIAGHRKAKANGESQLNVRGENDDEDVPAASEFALPRLPTLGAKIRVPKFKGAIVLNKDHLIKYTPDQRDLSNTRATQEQFEKWYSGVRNEVEKTDEEMALLLNGSMVWCMENGTSPDLSGSWTMMEGEEQIAYPLEPFCRHAQPTLRSIMAHFSDAATAYVVLRNQKSRYMPRYGLKRGLNDYSLAPYAFDFYEITSTSPLRARERHAQMKAAAIRGKASRMFGLDGNVSAQSENTERHTVEDVNTRVHSLSGANML</sequence>